<reference key="1">
    <citation type="journal article" date="2003" name="Science">
        <title>Role of mobile DNA in the evolution of vancomycin-resistant Enterococcus faecalis.</title>
        <authorList>
            <person name="Paulsen I.T."/>
            <person name="Banerjei L."/>
            <person name="Myers G.S.A."/>
            <person name="Nelson K.E."/>
            <person name="Seshadri R."/>
            <person name="Read T.D."/>
            <person name="Fouts D.E."/>
            <person name="Eisen J.A."/>
            <person name="Gill S.R."/>
            <person name="Heidelberg J.F."/>
            <person name="Tettelin H."/>
            <person name="Dodson R.J."/>
            <person name="Umayam L.A."/>
            <person name="Brinkac L.M."/>
            <person name="Beanan M.J."/>
            <person name="Daugherty S.C."/>
            <person name="DeBoy R.T."/>
            <person name="Durkin S.A."/>
            <person name="Kolonay J.F."/>
            <person name="Madupu R."/>
            <person name="Nelson W.C."/>
            <person name="Vamathevan J.J."/>
            <person name="Tran B."/>
            <person name="Upton J."/>
            <person name="Hansen T."/>
            <person name="Shetty J."/>
            <person name="Khouri H.M."/>
            <person name="Utterback T.R."/>
            <person name="Radune D."/>
            <person name="Ketchum K.A."/>
            <person name="Dougherty B.A."/>
            <person name="Fraser C.M."/>
        </authorList>
    </citation>
    <scope>NUCLEOTIDE SEQUENCE [LARGE SCALE GENOMIC DNA]</scope>
    <source>
        <strain>ATCC 700802 / V583</strain>
    </source>
</reference>
<gene>
    <name type="ordered locus">EF_1371</name>
</gene>
<protein>
    <recommendedName>
        <fullName evidence="1">UPF0173 metal-dependent hydrolase EF_1371</fullName>
    </recommendedName>
</protein>
<keyword id="KW-0378">Hydrolase</keyword>
<keyword id="KW-1185">Reference proteome</keyword>
<comment type="similarity">
    <text evidence="1">Belongs to the UPF0173 family.</text>
</comment>
<feature type="chain" id="PRO_0000367179" description="UPF0173 metal-dependent hydrolase EF_1371">
    <location>
        <begin position="1"/>
        <end position="224"/>
    </location>
</feature>
<proteinExistence type="inferred from homology"/>
<accession>Q835K6</accession>
<sequence length="224" mass="24238">MELIGHGHSCIEIRLNDGTNLLFDPFINGNPLADVSLADLHPDYILITHGHSDHIGDMLAIAQANKATIIAIAEVAMYAQSQGVKAHGMNLGGRYVFPFGSVKFVPALHSSGYEIDGVMTYMGEASGIILEAEDKKIYHAGDTALFSDMRLFAKDKSIDVAFLPIGDNYTMGPEDALEAIAYLNPEITIPIHYNTFPVIQQNPAIFVEQVVGGKVLNPGETILV</sequence>
<evidence type="ECO:0000255" key="1">
    <source>
        <dbReference type="HAMAP-Rule" id="MF_00457"/>
    </source>
</evidence>
<dbReference type="EMBL" id="AE016830">
    <property type="protein sequence ID" value="AAO81162.1"/>
    <property type="molecule type" value="Genomic_DNA"/>
</dbReference>
<dbReference type="RefSeq" id="NP_815092.1">
    <property type="nucleotide sequence ID" value="NC_004668.1"/>
</dbReference>
<dbReference type="RefSeq" id="WP_002379405.1">
    <property type="nucleotide sequence ID" value="NZ_KE136528.1"/>
</dbReference>
<dbReference type="SMR" id="Q835K6"/>
<dbReference type="STRING" id="226185.EF_1371"/>
<dbReference type="EnsemblBacteria" id="AAO81162">
    <property type="protein sequence ID" value="AAO81162"/>
    <property type="gene ID" value="EF_1371"/>
</dbReference>
<dbReference type="KEGG" id="efa:EF1371"/>
<dbReference type="PATRIC" id="fig|226185.45.peg.2129"/>
<dbReference type="eggNOG" id="COG2220">
    <property type="taxonomic scope" value="Bacteria"/>
</dbReference>
<dbReference type="HOGENOM" id="CLU_070010_4_1_9"/>
<dbReference type="Proteomes" id="UP000001415">
    <property type="component" value="Chromosome"/>
</dbReference>
<dbReference type="GO" id="GO:0016787">
    <property type="term" value="F:hydrolase activity"/>
    <property type="evidence" value="ECO:0007669"/>
    <property type="project" value="UniProtKB-UniRule"/>
</dbReference>
<dbReference type="Gene3D" id="3.60.15.10">
    <property type="entry name" value="Ribonuclease Z/Hydroxyacylglutathione hydrolase-like"/>
    <property type="match status" value="1"/>
</dbReference>
<dbReference type="HAMAP" id="MF_00457">
    <property type="entry name" value="UPF0173"/>
    <property type="match status" value="1"/>
</dbReference>
<dbReference type="InterPro" id="IPR001279">
    <property type="entry name" value="Metallo-B-lactamas"/>
</dbReference>
<dbReference type="InterPro" id="IPR036866">
    <property type="entry name" value="RibonucZ/Hydroxyglut_hydro"/>
</dbReference>
<dbReference type="InterPro" id="IPR022877">
    <property type="entry name" value="UPF0173"/>
</dbReference>
<dbReference type="InterPro" id="IPR050114">
    <property type="entry name" value="UPF0173_UPF0282_UlaG_hydrolase"/>
</dbReference>
<dbReference type="NCBIfam" id="NF001911">
    <property type="entry name" value="PRK00685.1"/>
    <property type="match status" value="1"/>
</dbReference>
<dbReference type="PANTHER" id="PTHR43546:SF3">
    <property type="entry name" value="UPF0173 METAL-DEPENDENT HYDROLASE MJ1163"/>
    <property type="match status" value="1"/>
</dbReference>
<dbReference type="PANTHER" id="PTHR43546">
    <property type="entry name" value="UPF0173 METAL-DEPENDENT HYDROLASE MJ1163-RELATED"/>
    <property type="match status" value="1"/>
</dbReference>
<dbReference type="Pfam" id="PF12706">
    <property type="entry name" value="Lactamase_B_2"/>
    <property type="match status" value="1"/>
</dbReference>
<dbReference type="SMART" id="SM00849">
    <property type="entry name" value="Lactamase_B"/>
    <property type="match status" value="1"/>
</dbReference>
<dbReference type="SUPFAM" id="SSF56281">
    <property type="entry name" value="Metallo-hydrolase/oxidoreductase"/>
    <property type="match status" value="1"/>
</dbReference>
<name>Y1371_ENTFA</name>
<organism>
    <name type="scientific">Enterococcus faecalis (strain ATCC 700802 / V583)</name>
    <dbReference type="NCBI Taxonomy" id="226185"/>
    <lineage>
        <taxon>Bacteria</taxon>
        <taxon>Bacillati</taxon>
        <taxon>Bacillota</taxon>
        <taxon>Bacilli</taxon>
        <taxon>Lactobacillales</taxon>
        <taxon>Enterococcaceae</taxon>
        <taxon>Enterococcus</taxon>
    </lineage>
</organism>